<sequence>MALTKADLSEHLFNVVGLNKREAKDLVELFFKEISLSLERGEPVKLSGFGNFNLRDKGERPGRNPKTGEEIPITARRVVTFRAGHKLKSRVEKNVKPKEEGES</sequence>
<evidence type="ECO:0000255" key="1">
    <source>
        <dbReference type="HAMAP-Rule" id="MF_00380"/>
    </source>
</evidence>
<evidence type="ECO:0000256" key="2">
    <source>
        <dbReference type="SAM" id="MobiDB-lite"/>
    </source>
</evidence>
<reference key="1">
    <citation type="journal article" date="2009" name="Infect. Immun.">
        <title>Comparative genomics reveal extensive transposon-mediated genomic plasticity and diversity among potential effector proteins within the genus Coxiella.</title>
        <authorList>
            <person name="Beare P.A."/>
            <person name="Unsworth N."/>
            <person name="Andoh M."/>
            <person name="Voth D.E."/>
            <person name="Omsland A."/>
            <person name="Gilk S.D."/>
            <person name="Williams K.P."/>
            <person name="Sobral B.W."/>
            <person name="Kupko J.J. III"/>
            <person name="Porcella S.F."/>
            <person name="Samuel J.E."/>
            <person name="Heinzen R.A."/>
        </authorList>
    </citation>
    <scope>NUCLEOTIDE SEQUENCE [LARGE SCALE GENOMIC DNA]</scope>
    <source>
        <strain>CbuG_Q212</strain>
    </source>
</reference>
<gene>
    <name evidence="1" type="primary">ihfA</name>
    <name evidence="1" type="synonym">himA</name>
    <name type="ordered locus">CbuG_0688</name>
</gene>
<organism>
    <name type="scientific">Coxiella burnetii (strain CbuG_Q212)</name>
    <name type="common">Coxiella burnetii (strain Q212)</name>
    <dbReference type="NCBI Taxonomy" id="434923"/>
    <lineage>
        <taxon>Bacteria</taxon>
        <taxon>Pseudomonadati</taxon>
        <taxon>Pseudomonadota</taxon>
        <taxon>Gammaproteobacteria</taxon>
        <taxon>Legionellales</taxon>
        <taxon>Coxiellaceae</taxon>
        <taxon>Coxiella</taxon>
    </lineage>
</organism>
<keyword id="KW-0233">DNA recombination</keyword>
<keyword id="KW-0238">DNA-binding</keyword>
<keyword id="KW-0804">Transcription</keyword>
<keyword id="KW-0805">Transcription regulation</keyword>
<keyword id="KW-0810">Translation regulation</keyword>
<dbReference type="EMBL" id="CP001019">
    <property type="protein sequence ID" value="ACJ18090.1"/>
    <property type="molecule type" value="Genomic_DNA"/>
</dbReference>
<dbReference type="RefSeq" id="WP_005770927.1">
    <property type="nucleotide sequence ID" value="NC_011527.1"/>
</dbReference>
<dbReference type="SMR" id="B6IZG2"/>
<dbReference type="KEGG" id="cbg:CbuG_0688"/>
<dbReference type="HOGENOM" id="CLU_105066_1_3_6"/>
<dbReference type="GO" id="GO:0005829">
    <property type="term" value="C:cytosol"/>
    <property type="evidence" value="ECO:0007669"/>
    <property type="project" value="TreeGrafter"/>
</dbReference>
<dbReference type="GO" id="GO:0003677">
    <property type="term" value="F:DNA binding"/>
    <property type="evidence" value="ECO:0007669"/>
    <property type="project" value="UniProtKB-UniRule"/>
</dbReference>
<dbReference type="GO" id="GO:0030527">
    <property type="term" value="F:structural constituent of chromatin"/>
    <property type="evidence" value="ECO:0007669"/>
    <property type="project" value="InterPro"/>
</dbReference>
<dbReference type="GO" id="GO:0006310">
    <property type="term" value="P:DNA recombination"/>
    <property type="evidence" value="ECO:0007669"/>
    <property type="project" value="UniProtKB-UniRule"/>
</dbReference>
<dbReference type="GO" id="GO:0009893">
    <property type="term" value="P:positive regulation of metabolic process"/>
    <property type="evidence" value="ECO:0007669"/>
    <property type="project" value="UniProtKB-ARBA"/>
</dbReference>
<dbReference type="GO" id="GO:0006355">
    <property type="term" value="P:regulation of DNA-templated transcription"/>
    <property type="evidence" value="ECO:0007669"/>
    <property type="project" value="UniProtKB-UniRule"/>
</dbReference>
<dbReference type="GO" id="GO:0006417">
    <property type="term" value="P:regulation of translation"/>
    <property type="evidence" value="ECO:0007669"/>
    <property type="project" value="UniProtKB-UniRule"/>
</dbReference>
<dbReference type="CDD" id="cd13835">
    <property type="entry name" value="IHF_A"/>
    <property type="match status" value="1"/>
</dbReference>
<dbReference type="FunFam" id="4.10.520.10:FF:000002">
    <property type="entry name" value="Integration host factor subunit alpha"/>
    <property type="match status" value="1"/>
</dbReference>
<dbReference type="Gene3D" id="4.10.520.10">
    <property type="entry name" value="IHF-like DNA-binding proteins"/>
    <property type="match status" value="1"/>
</dbReference>
<dbReference type="HAMAP" id="MF_00380">
    <property type="entry name" value="IHF_alpha"/>
    <property type="match status" value="1"/>
</dbReference>
<dbReference type="InterPro" id="IPR000119">
    <property type="entry name" value="Hist_DNA-bd"/>
</dbReference>
<dbReference type="InterPro" id="IPR020816">
    <property type="entry name" value="Histone-like_DNA-bd_CS"/>
</dbReference>
<dbReference type="InterPro" id="IPR010992">
    <property type="entry name" value="IHF-like_DNA-bd_dom_sf"/>
</dbReference>
<dbReference type="InterPro" id="IPR005684">
    <property type="entry name" value="IHF_alpha"/>
</dbReference>
<dbReference type="NCBIfam" id="TIGR00987">
    <property type="entry name" value="himA"/>
    <property type="match status" value="1"/>
</dbReference>
<dbReference type="NCBIfam" id="NF001401">
    <property type="entry name" value="PRK00285.1"/>
    <property type="match status" value="1"/>
</dbReference>
<dbReference type="PANTHER" id="PTHR33175">
    <property type="entry name" value="DNA-BINDING PROTEIN HU"/>
    <property type="match status" value="1"/>
</dbReference>
<dbReference type="PANTHER" id="PTHR33175:SF2">
    <property type="entry name" value="INTEGRATION HOST FACTOR SUBUNIT ALPHA"/>
    <property type="match status" value="1"/>
</dbReference>
<dbReference type="Pfam" id="PF00216">
    <property type="entry name" value="Bac_DNA_binding"/>
    <property type="match status" value="1"/>
</dbReference>
<dbReference type="PRINTS" id="PR01727">
    <property type="entry name" value="DNABINDINGHU"/>
</dbReference>
<dbReference type="SMART" id="SM00411">
    <property type="entry name" value="BHL"/>
    <property type="match status" value="1"/>
</dbReference>
<dbReference type="SUPFAM" id="SSF47729">
    <property type="entry name" value="IHF-like DNA-binding proteins"/>
    <property type="match status" value="1"/>
</dbReference>
<dbReference type="PROSITE" id="PS00045">
    <property type="entry name" value="HISTONE_LIKE"/>
    <property type="match status" value="1"/>
</dbReference>
<name>IHFA_COXB2</name>
<accession>B6IZG2</accession>
<feature type="chain" id="PRO_1000122132" description="Integration host factor subunit alpha">
    <location>
        <begin position="1"/>
        <end position="103"/>
    </location>
</feature>
<feature type="region of interest" description="Disordered" evidence="2">
    <location>
        <begin position="50"/>
        <end position="72"/>
    </location>
</feature>
<feature type="compositionally biased region" description="Basic and acidic residues" evidence="2">
    <location>
        <begin position="54"/>
        <end position="69"/>
    </location>
</feature>
<proteinExistence type="inferred from homology"/>
<protein>
    <recommendedName>
        <fullName evidence="1">Integration host factor subunit alpha</fullName>
        <shortName evidence="1">IHF-alpha</shortName>
    </recommendedName>
</protein>
<comment type="function">
    <text evidence="1">This protein is one of the two subunits of integration host factor, a specific DNA-binding protein that functions in genetic recombination as well as in transcriptional and translational control.</text>
</comment>
<comment type="subunit">
    <text evidence="1">Heterodimer of an alpha and a beta chain.</text>
</comment>
<comment type="similarity">
    <text evidence="1">Belongs to the bacterial histone-like protein family.</text>
</comment>